<evidence type="ECO:0000255" key="1">
    <source>
        <dbReference type="HAMAP-Rule" id="MF_00366"/>
    </source>
</evidence>
<evidence type="ECO:0000256" key="2">
    <source>
        <dbReference type="SAM" id="MobiDB-lite"/>
    </source>
</evidence>
<organism>
    <name type="scientific">Rhodopseudomonas palustris (strain HaA2)</name>
    <dbReference type="NCBI Taxonomy" id="316058"/>
    <lineage>
        <taxon>Bacteria</taxon>
        <taxon>Pseudomonadati</taxon>
        <taxon>Pseudomonadota</taxon>
        <taxon>Alphaproteobacteria</taxon>
        <taxon>Hyphomicrobiales</taxon>
        <taxon>Nitrobacteraceae</taxon>
        <taxon>Rhodopseudomonas</taxon>
    </lineage>
</organism>
<protein>
    <recommendedName>
        <fullName evidence="1">DNA-directed RNA polymerase subunit omega</fullName>
        <shortName evidence="1">RNAP omega subunit</shortName>
        <ecNumber evidence="1">2.7.7.6</ecNumber>
    </recommendedName>
    <alternativeName>
        <fullName evidence="1">RNA polymerase omega subunit</fullName>
    </alternativeName>
    <alternativeName>
        <fullName evidence="1">Transcriptase subunit omega</fullName>
    </alternativeName>
</protein>
<feature type="chain" id="PRO_1000005990" description="DNA-directed RNA polymerase subunit omega">
    <location>
        <begin position="1"/>
        <end position="130"/>
    </location>
</feature>
<feature type="region of interest" description="Disordered" evidence="2">
    <location>
        <begin position="110"/>
        <end position="130"/>
    </location>
</feature>
<keyword id="KW-0240">DNA-directed RNA polymerase</keyword>
<keyword id="KW-0548">Nucleotidyltransferase</keyword>
<keyword id="KW-1185">Reference proteome</keyword>
<keyword id="KW-0804">Transcription</keyword>
<keyword id="KW-0808">Transferase</keyword>
<sequence length="130" mass="14412">MARVTVEDCIDKVDNRFDLVLLAAHRARMISSGSQLTIDRDNDKNPVVSLREIAEQTVSPEDLKEELVHSLQKFVEVDEPEQDTVPLIGSAGASVDADDTEVALERMTEEELLKGLEGLAPPEEQPEEDE</sequence>
<reference key="1">
    <citation type="submission" date="2006-01" db="EMBL/GenBank/DDBJ databases">
        <title>Complete sequence of Rhodopseudomonas palustris HaA2.</title>
        <authorList>
            <consortium name="US DOE Joint Genome Institute"/>
            <person name="Copeland A."/>
            <person name="Lucas S."/>
            <person name="Lapidus A."/>
            <person name="Barry K."/>
            <person name="Detter J.C."/>
            <person name="Glavina T."/>
            <person name="Hammon N."/>
            <person name="Israni S."/>
            <person name="Pitluck S."/>
            <person name="Chain P."/>
            <person name="Malfatti S."/>
            <person name="Shin M."/>
            <person name="Vergez L."/>
            <person name="Schmutz J."/>
            <person name="Larimer F."/>
            <person name="Land M."/>
            <person name="Hauser L."/>
            <person name="Pelletier D.A."/>
            <person name="Kyrpides N."/>
            <person name="Anderson I."/>
            <person name="Oda Y."/>
            <person name="Harwood C.S."/>
            <person name="Richardson P."/>
        </authorList>
    </citation>
    <scope>NUCLEOTIDE SEQUENCE [LARGE SCALE GENOMIC DNA]</scope>
    <source>
        <strain>HaA2</strain>
    </source>
</reference>
<name>RPOZ_RHOP2</name>
<dbReference type="EC" id="2.7.7.6" evidence="1"/>
<dbReference type="EMBL" id="CP000250">
    <property type="protein sequence ID" value="ABD07310.1"/>
    <property type="molecule type" value="Genomic_DNA"/>
</dbReference>
<dbReference type="RefSeq" id="WP_011441495.1">
    <property type="nucleotide sequence ID" value="NC_007778.1"/>
</dbReference>
<dbReference type="SMR" id="Q2IWV0"/>
<dbReference type="STRING" id="316058.RPB_2607"/>
<dbReference type="KEGG" id="rpb:RPB_2607"/>
<dbReference type="eggNOG" id="COG1758">
    <property type="taxonomic scope" value="Bacteria"/>
</dbReference>
<dbReference type="HOGENOM" id="CLU_125406_2_0_5"/>
<dbReference type="OrthoDB" id="9796300at2"/>
<dbReference type="Proteomes" id="UP000008809">
    <property type="component" value="Chromosome"/>
</dbReference>
<dbReference type="GO" id="GO:0000428">
    <property type="term" value="C:DNA-directed RNA polymerase complex"/>
    <property type="evidence" value="ECO:0007669"/>
    <property type="project" value="UniProtKB-KW"/>
</dbReference>
<dbReference type="GO" id="GO:0003677">
    <property type="term" value="F:DNA binding"/>
    <property type="evidence" value="ECO:0007669"/>
    <property type="project" value="UniProtKB-UniRule"/>
</dbReference>
<dbReference type="GO" id="GO:0003899">
    <property type="term" value="F:DNA-directed RNA polymerase activity"/>
    <property type="evidence" value="ECO:0007669"/>
    <property type="project" value="UniProtKB-UniRule"/>
</dbReference>
<dbReference type="GO" id="GO:0006351">
    <property type="term" value="P:DNA-templated transcription"/>
    <property type="evidence" value="ECO:0007669"/>
    <property type="project" value="UniProtKB-UniRule"/>
</dbReference>
<dbReference type="Gene3D" id="3.90.940.10">
    <property type="match status" value="1"/>
</dbReference>
<dbReference type="HAMAP" id="MF_00366">
    <property type="entry name" value="RNApol_bact_RpoZ"/>
    <property type="match status" value="1"/>
</dbReference>
<dbReference type="InterPro" id="IPR003716">
    <property type="entry name" value="DNA-dir_RNA_pol_omega"/>
</dbReference>
<dbReference type="InterPro" id="IPR006110">
    <property type="entry name" value="Pol_omega/Rpo6/RPB6"/>
</dbReference>
<dbReference type="InterPro" id="IPR036161">
    <property type="entry name" value="RPB6/omega-like_sf"/>
</dbReference>
<dbReference type="NCBIfam" id="TIGR00690">
    <property type="entry name" value="rpoZ"/>
    <property type="match status" value="1"/>
</dbReference>
<dbReference type="PANTHER" id="PTHR34476">
    <property type="entry name" value="DNA-DIRECTED RNA POLYMERASE SUBUNIT OMEGA"/>
    <property type="match status" value="1"/>
</dbReference>
<dbReference type="PANTHER" id="PTHR34476:SF1">
    <property type="entry name" value="DNA-DIRECTED RNA POLYMERASE SUBUNIT OMEGA"/>
    <property type="match status" value="1"/>
</dbReference>
<dbReference type="Pfam" id="PF01192">
    <property type="entry name" value="RNA_pol_Rpb6"/>
    <property type="match status" value="1"/>
</dbReference>
<dbReference type="SMART" id="SM01409">
    <property type="entry name" value="RNA_pol_Rpb6"/>
    <property type="match status" value="1"/>
</dbReference>
<dbReference type="SUPFAM" id="SSF63562">
    <property type="entry name" value="RPB6/omega subunit-like"/>
    <property type="match status" value="1"/>
</dbReference>
<accession>Q2IWV0</accession>
<proteinExistence type="inferred from homology"/>
<gene>
    <name evidence="1" type="primary">rpoZ</name>
    <name type="ordered locus">RPB_2607</name>
</gene>
<comment type="function">
    <text evidence="1">Promotes RNA polymerase assembly. Latches the N- and C-terminal regions of the beta' subunit thereby facilitating its interaction with the beta and alpha subunits.</text>
</comment>
<comment type="catalytic activity">
    <reaction evidence="1">
        <text>RNA(n) + a ribonucleoside 5'-triphosphate = RNA(n+1) + diphosphate</text>
        <dbReference type="Rhea" id="RHEA:21248"/>
        <dbReference type="Rhea" id="RHEA-COMP:14527"/>
        <dbReference type="Rhea" id="RHEA-COMP:17342"/>
        <dbReference type="ChEBI" id="CHEBI:33019"/>
        <dbReference type="ChEBI" id="CHEBI:61557"/>
        <dbReference type="ChEBI" id="CHEBI:140395"/>
        <dbReference type="EC" id="2.7.7.6"/>
    </reaction>
</comment>
<comment type="subunit">
    <text evidence="1">The RNAP catalytic core consists of 2 alpha, 1 beta, 1 beta' and 1 omega subunit. When a sigma factor is associated with the core the holoenzyme is formed, which can initiate transcription.</text>
</comment>
<comment type="similarity">
    <text evidence="1">Belongs to the RNA polymerase subunit omega family.</text>
</comment>